<proteinExistence type="evidence at protein level"/>
<name>TCPD_YEAST</name>
<sequence length="528" mass="57604">MSAKVPSNATFKNKEKPQEVRKANIIAARSVADAIRTSLGPKGMDKMIKTSRGEIIISNDGHTILKQMAILHPVARMLVEVSAAQDSEAGDGTTSVVILTGALLGAAERLLNKGIHPTIIADSFQSAAKRSVDILLEMCHKVSLSDREQLVRAASTSLSSKIVSQYSSFLAPLAVDSVLKISDENSKNVDLNDIRLVKKVGGTIDDTEMIDGVVLTQTAIKSAGGPTRKEKAKIGLIQFQISPPKPDTENNIIVNDYRQMDKILKEERAYLLNICKKIKKAKCNVLLIQKSILRDAVNDLALHFLSKLNIMVVKDIEREEIEFLSKGLGCKPIADIELFTEDRLGSADLVEEIDSDGSKIVRVTGIRNNNARPTVSVVIRGANNMIIDETERSLHDALCVIRCLVKERGLIAGGGAPEIEISRRLSKEARSMEGVQAFIWQEFASALEVIPTTLAENAGLNSIKVVTELRSKHENGELNDGISVRRSGTTNTYEEHILQPVLVSTSAITLASECVKSILRIDDIAFSR</sequence>
<feature type="chain" id="PRO_0000128345" description="T-complex protein 1 subunit delta">
    <location>
        <begin position="1"/>
        <end position="528"/>
    </location>
</feature>
<feature type="sequence conflict" description="In Ref. 1; CAA83912." evidence="2" ref="1">
    <original>V</original>
    <variation>A</variation>
    <location>
        <position position="254"/>
    </location>
</feature>
<feature type="strand" evidence="3">
    <location>
        <begin position="7"/>
        <end position="9"/>
    </location>
</feature>
<feature type="helix" evidence="3">
    <location>
        <begin position="16"/>
        <end position="36"/>
    </location>
</feature>
<feature type="strand" evidence="3">
    <location>
        <begin position="45"/>
        <end position="49"/>
    </location>
</feature>
<feature type="strand" evidence="4">
    <location>
        <begin position="51"/>
        <end position="53"/>
    </location>
</feature>
<feature type="strand" evidence="3">
    <location>
        <begin position="55"/>
        <end position="58"/>
    </location>
</feature>
<feature type="helix" evidence="3">
    <location>
        <begin position="61"/>
        <end position="67"/>
    </location>
</feature>
<feature type="turn" evidence="3">
    <location>
        <begin position="73"/>
        <end position="76"/>
    </location>
</feature>
<feature type="helix" evidence="3">
    <location>
        <begin position="77"/>
        <end position="87"/>
    </location>
</feature>
<feature type="helix" evidence="3">
    <location>
        <begin position="93"/>
        <end position="111"/>
    </location>
</feature>
<feature type="turn" evidence="3">
    <location>
        <begin position="112"/>
        <end position="114"/>
    </location>
</feature>
<feature type="helix" evidence="3">
    <location>
        <begin position="117"/>
        <end position="138"/>
    </location>
</feature>
<feature type="helix" evidence="3">
    <location>
        <begin position="147"/>
        <end position="158"/>
    </location>
</feature>
<feature type="helix" evidence="3">
    <location>
        <begin position="162"/>
        <end position="164"/>
    </location>
</feature>
<feature type="helix" evidence="3">
    <location>
        <begin position="167"/>
        <end position="179"/>
    </location>
</feature>
<feature type="turn" evidence="4">
    <location>
        <begin position="180"/>
        <end position="182"/>
    </location>
</feature>
<feature type="strand" evidence="4">
    <location>
        <begin position="184"/>
        <end position="187"/>
    </location>
</feature>
<feature type="helix" evidence="3">
    <location>
        <begin position="191"/>
        <end position="193"/>
    </location>
</feature>
<feature type="strand" evidence="3">
    <location>
        <begin position="194"/>
        <end position="202"/>
    </location>
</feature>
<feature type="helix" evidence="3">
    <location>
        <begin position="204"/>
        <end position="206"/>
    </location>
</feature>
<feature type="strand" evidence="3">
    <location>
        <begin position="208"/>
        <end position="212"/>
    </location>
</feature>
<feature type="strand" evidence="3">
    <location>
        <begin position="214"/>
        <end position="217"/>
    </location>
</feature>
<feature type="strand" evidence="3">
    <location>
        <begin position="229"/>
        <end position="232"/>
    </location>
</feature>
<feature type="strand" evidence="4">
    <location>
        <begin position="234"/>
        <end position="237"/>
    </location>
</feature>
<feature type="strand" evidence="4">
    <location>
        <begin position="241"/>
        <end position="243"/>
    </location>
</feature>
<feature type="strand" evidence="3">
    <location>
        <begin position="250"/>
        <end position="252"/>
    </location>
</feature>
<feature type="helix" evidence="3">
    <location>
        <begin position="257"/>
        <end position="280"/>
    </location>
</feature>
<feature type="strand" evidence="3">
    <location>
        <begin position="285"/>
        <end position="289"/>
    </location>
</feature>
<feature type="strand" evidence="3">
    <location>
        <begin position="292"/>
        <end position="294"/>
    </location>
</feature>
<feature type="helix" evidence="3">
    <location>
        <begin position="299"/>
        <end position="307"/>
    </location>
</feature>
<feature type="strand" evidence="3">
    <location>
        <begin position="311"/>
        <end position="316"/>
    </location>
</feature>
<feature type="helix" evidence="3">
    <location>
        <begin position="321"/>
        <end position="328"/>
    </location>
</feature>
<feature type="turn" evidence="3">
    <location>
        <begin position="336"/>
        <end position="338"/>
    </location>
</feature>
<feature type="strand" evidence="3">
    <location>
        <begin position="347"/>
        <end position="355"/>
    </location>
</feature>
<feature type="strand" evidence="3">
    <location>
        <begin position="358"/>
        <end position="364"/>
    </location>
</feature>
<feature type="strand" evidence="3">
    <location>
        <begin position="375"/>
        <end position="383"/>
    </location>
</feature>
<feature type="helix" evidence="3">
    <location>
        <begin position="384"/>
        <end position="406"/>
    </location>
</feature>
<feature type="strand" evidence="3">
    <location>
        <begin position="410"/>
        <end position="412"/>
    </location>
</feature>
<feature type="helix" evidence="3">
    <location>
        <begin position="416"/>
        <end position="429"/>
    </location>
</feature>
<feature type="turn" evidence="3">
    <location>
        <begin position="430"/>
        <end position="432"/>
    </location>
</feature>
<feature type="helix" evidence="3">
    <location>
        <begin position="435"/>
        <end position="446"/>
    </location>
</feature>
<feature type="helix" evidence="3">
    <location>
        <begin position="449"/>
        <end position="457"/>
    </location>
</feature>
<feature type="helix" evidence="3">
    <location>
        <begin position="462"/>
        <end position="475"/>
    </location>
</feature>
<feature type="strand" evidence="3">
    <location>
        <begin position="480"/>
        <end position="483"/>
    </location>
</feature>
<feature type="turn" evidence="3">
    <location>
        <begin position="484"/>
        <end position="487"/>
    </location>
</feature>
<feature type="strand" evidence="3">
    <location>
        <begin position="488"/>
        <end position="491"/>
    </location>
</feature>
<feature type="turn" evidence="3">
    <location>
        <begin position="492"/>
        <end position="496"/>
    </location>
</feature>
<feature type="strand" evidence="3">
    <location>
        <begin position="498"/>
        <end position="500"/>
    </location>
</feature>
<feature type="helix" evidence="3">
    <location>
        <begin position="501"/>
        <end position="518"/>
    </location>
</feature>
<feature type="strand" evidence="3">
    <location>
        <begin position="521"/>
        <end position="527"/>
    </location>
</feature>
<keyword id="KW-0002">3D-structure</keyword>
<keyword id="KW-0067">ATP-binding</keyword>
<keyword id="KW-0143">Chaperone</keyword>
<keyword id="KW-0963">Cytoplasm</keyword>
<keyword id="KW-0547">Nucleotide-binding</keyword>
<keyword id="KW-1185">Reference proteome</keyword>
<reference key="1">
    <citation type="journal article" date="1994" name="Proc. Natl. Acad. Sci. U.S.A.">
        <title>A yeast TCP-1-like protein is required for actin function in vivo.</title>
        <authorList>
            <person name="Vinh D."/>
            <person name="Drubin D.G."/>
        </authorList>
    </citation>
    <scope>NUCLEOTIDE SEQUENCE [GENOMIC DNA]</scope>
    <source>
        <strain>ATCC 204508 / S288c</strain>
    </source>
</reference>
<reference key="2">
    <citation type="journal article" date="1997" name="Nature">
        <title>The nucleotide sequence of Saccharomyces cerevisiae chromosome IV.</title>
        <authorList>
            <person name="Jacq C."/>
            <person name="Alt-Moerbe J."/>
            <person name="Andre B."/>
            <person name="Arnold W."/>
            <person name="Bahr A."/>
            <person name="Ballesta J.P.G."/>
            <person name="Bargues M."/>
            <person name="Baron L."/>
            <person name="Becker A."/>
            <person name="Biteau N."/>
            <person name="Bloecker H."/>
            <person name="Blugeon C."/>
            <person name="Boskovic J."/>
            <person name="Brandt P."/>
            <person name="Brueckner M."/>
            <person name="Buitrago M.J."/>
            <person name="Coster F."/>
            <person name="Delaveau T."/>
            <person name="del Rey F."/>
            <person name="Dujon B."/>
            <person name="Eide L.G."/>
            <person name="Garcia-Cantalejo J.M."/>
            <person name="Goffeau A."/>
            <person name="Gomez-Peris A."/>
            <person name="Granotier C."/>
            <person name="Hanemann V."/>
            <person name="Hankeln T."/>
            <person name="Hoheisel J.D."/>
            <person name="Jaeger W."/>
            <person name="Jimenez A."/>
            <person name="Jonniaux J.-L."/>
            <person name="Kraemer C."/>
            <person name="Kuester H."/>
            <person name="Laamanen P."/>
            <person name="Legros Y."/>
            <person name="Louis E.J."/>
            <person name="Moeller-Rieker S."/>
            <person name="Monnet A."/>
            <person name="Moro M."/>
            <person name="Mueller-Auer S."/>
            <person name="Nussbaumer B."/>
            <person name="Paricio N."/>
            <person name="Paulin L."/>
            <person name="Perea J."/>
            <person name="Perez-Alonso M."/>
            <person name="Perez-Ortin J.E."/>
            <person name="Pohl T.M."/>
            <person name="Prydz H."/>
            <person name="Purnelle B."/>
            <person name="Rasmussen S.W."/>
            <person name="Remacha M.A."/>
            <person name="Revuelta J.L."/>
            <person name="Rieger M."/>
            <person name="Salom D."/>
            <person name="Saluz H.P."/>
            <person name="Saiz J.E."/>
            <person name="Saren A.-M."/>
            <person name="Schaefer M."/>
            <person name="Scharfe M."/>
            <person name="Schmidt E.R."/>
            <person name="Schneider C."/>
            <person name="Scholler P."/>
            <person name="Schwarz S."/>
            <person name="Soler-Mira A."/>
            <person name="Urrestarazu L.A."/>
            <person name="Verhasselt P."/>
            <person name="Vissers S."/>
            <person name="Voet M."/>
            <person name="Volckaert G."/>
            <person name="Wagner G."/>
            <person name="Wambutt R."/>
            <person name="Wedler E."/>
            <person name="Wedler H."/>
            <person name="Woelfl S."/>
            <person name="Harris D.E."/>
            <person name="Bowman S."/>
            <person name="Brown D."/>
            <person name="Churcher C.M."/>
            <person name="Connor R."/>
            <person name="Dedman K."/>
            <person name="Gentles S."/>
            <person name="Hamlin N."/>
            <person name="Hunt S."/>
            <person name="Jones L."/>
            <person name="McDonald S."/>
            <person name="Murphy L.D."/>
            <person name="Niblett D."/>
            <person name="Odell C."/>
            <person name="Oliver K."/>
            <person name="Rajandream M.A."/>
            <person name="Richards C."/>
            <person name="Shore L."/>
            <person name="Walsh S.V."/>
            <person name="Barrell B.G."/>
            <person name="Dietrich F.S."/>
            <person name="Mulligan J.T."/>
            <person name="Allen E."/>
            <person name="Araujo R."/>
            <person name="Aviles E."/>
            <person name="Berno A."/>
            <person name="Carpenter J."/>
            <person name="Chen E."/>
            <person name="Cherry J.M."/>
            <person name="Chung E."/>
            <person name="Duncan M."/>
            <person name="Hunicke-Smith S."/>
            <person name="Hyman R.W."/>
            <person name="Komp C."/>
            <person name="Lashkari D."/>
            <person name="Lew H."/>
            <person name="Lin D."/>
            <person name="Mosedale D."/>
            <person name="Nakahara K."/>
            <person name="Namath A."/>
            <person name="Oefner P."/>
            <person name="Oh C."/>
            <person name="Petel F.X."/>
            <person name="Roberts D."/>
            <person name="Schramm S."/>
            <person name="Schroeder M."/>
            <person name="Shogren T."/>
            <person name="Shroff N."/>
            <person name="Winant A."/>
            <person name="Yelton M.A."/>
            <person name="Botstein D."/>
            <person name="Davis R.W."/>
            <person name="Johnston M."/>
            <person name="Andrews S."/>
            <person name="Brinkman R."/>
            <person name="Cooper J."/>
            <person name="Ding H."/>
            <person name="Du Z."/>
            <person name="Favello A."/>
            <person name="Fulton L."/>
            <person name="Gattung S."/>
            <person name="Greco T."/>
            <person name="Hallsworth K."/>
            <person name="Hawkins J."/>
            <person name="Hillier L.W."/>
            <person name="Jier M."/>
            <person name="Johnson D."/>
            <person name="Johnston L."/>
            <person name="Kirsten J."/>
            <person name="Kucaba T."/>
            <person name="Langston Y."/>
            <person name="Latreille P."/>
            <person name="Le T."/>
            <person name="Mardis E."/>
            <person name="Menezes S."/>
            <person name="Miller N."/>
            <person name="Nhan M."/>
            <person name="Pauley A."/>
            <person name="Peluso D."/>
            <person name="Rifkin L."/>
            <person name="Riles L."/>
            <person name="Taich A."/>
            <person name="Trevaskis E."/>
            <person name="Vignati D."/>
            <person name="Wilcox L."/>
            <person name="Wohldman P."/>
            <person name="Vaudin M."/>
            <person name="Wilson R."/>
            <person name="Waterston R."/>
            <person name="Albermann K."/>
            <person name="Hani J."/>
            <person name="Heumann K."/>
            <person name="Kleine K."/>
            <person name="Mewes H.-W."/>
            <person name="Zollner A."/>
            <person name="Zaccaria P."/>
        </authorList>
    </citation>
    <scope>NUCLEOTIDE SEQUENCE [LARGE SCALE GENOMIC DNA]</scope>
    <source>
        <strain>ATCC 204508 / S288c</strain>
    </source>
</reference>
<reference key="3">
    <citation type="journal article" date="2014" name="G3 (Bethesda)">
        <title>The reference genome sequence of Saccharomyces cerevisiae: Then and now.</title>
        <authorList>
            <person name="Engel S.R."/>
            <person name="Dietrich F.S."/>
            <person name="Fisk D.G."/>
            <person name="Binkley G."/>
            <person name="Balakrishnan R."/>
            <person name="Costanzo M.C."/>
            <person name="Dwight S.S."/>
            <person name="Hitz B.C."/>
            <person name="Karra K."/>
            <person name="Nash R.S."/>
            <person name="Weng S."/>
            <person name="Wong E.D."/>
            <person name="Lloyd P."/>
            <person name="Skrzypek M.S."/>
            <person name="Miyasato S.R."/>
            <person name="Simison M."/>
            <person name="Cherry J.M."/>
        </authorList>
    </citation>
    <scope>GENOME REANNOTATION</scope>
    <source>
        <strain>ATCC 204508 / S288c</strain>
    </source>
</reference>
<reference key="4">
    <citation type="journal article" date="2003" name="Nature">
        <title>Global analysis of protein expression in yeast.</title>
        <authorList>
            <person name="Ghaemmaghami S."/>
            <person name="Huh W.-K."/>
            <person name="Bower K."/>
            <person name="Howson R.W."/>
            <person name="Belle A."/>
            <person name="Dephoure N."/>
            <person name="O'Shea E.K."/>
            <person name="Weissman J.S."/>
        </authorList>
    </citation>
    <scope>LEVEL OF PROTEIN EXPRESSION [LARGE SCALE ANALYSIS]</scope>
</reference>
<evidence type="ECO:0000269" key="1">
    <source>
    </source>
</evidence>
<evidence type="ECO:0000305" key="2"/>
<evidence type="ECO:0007829" key="3">
    <source>
        <dbReference type="PDB" id="6KS6"/>
    </source>
</evidence>
<evidence type="ECO:0007829" key="4">
    <source>
        <dbReference type="PDB" id="7YLY"/>
    </source>
</evidence>
<gene>
    <name type="primary">CCT4</name>
    <name type="synonym">ANC2</name>
    <name type="synonym">TCP4</name>
    <name type="ordered locus">YDL143W</name>
</gene>
<accession>P39078</accession>
<accession>D6VRK5</accession>
<accession>Q07561</accession>
<protein>
    <recommendedName>
        <fullName>T-complex protein 1 subunit delta</fullName>
        <shortName>TCP-1-delta</shortName>
    </recommendedName>
    <alternativeName>
        <fullName>CCT-delta</fullName>
    </alternativeName>
</protein>
<dbReference type="EMBL" id="Z33504">
    <property type="protein sequence ID" value="CAA83912.1"/>
    <property type="molecule type" value="Genomic_DNA"/>
</dbReference>
<dbReference type="EMBL" id="Z74191">
    <property type="protein sequence ID" value="CAA98716.1"/>
    <property type="molecule type" value="Genomic_DNA"/>
</dbReference>
<dbReference type="EMBL" id="BK006938">
    <property type="protein sequence ID" value="DAA11715.1"/>
    <property type="molecule type" value="Genomic_DNA"/>
</dbReference>
<dbReference type="PIR" id="S67690">
    <property type="entry name" value="S67690"/>
</dbReference>
<dbReference type="RefSeq" id="NP_010138.1">
    <property type="nucleotide sequence ID" value="NM_001180203.1"/>
</dbReference>
<dbReference type="PDB" id="4V81">
    <property type="method" value="X-ray"/>
    <property type="resolution" value="3.80 A"/>
    <property type="chains" value="D/L/d/l=1-528"/>
</dbReference>
<dbReference type="PDB" id="4V8R">
    <property type="method" value="X-ray"/>
    <property type="resolution" value="3.80 A"/>
    <property type="chains" value="AD/Ad/BD/Bd=1-528"/>
</dbReference>
<dbReference type="PDB" id="4V94">
    <property type="method" value="X-ray"/>
    <property type="resolution" value="3.80 A"/>
    <property type="chains" value="D/L/d/l=1-528"/>
</dbReference>
<dbReference type="PDB" id="5GW4">
    <property type="method" value="EM"/>
    <property type="resolution" value="4.70 A"/>
    <property type="chains" value="D/d=1-528"/>
</dbReference>
<dbReference type="PDB" id="5GW5">
    <property type="method" value="EM"/>
    <property type="resolution" value="4.60 A"/>
    <property type="chains" value="D/d=1-528"/>
</dbReference>
<dbReference type="PDB" id="6KRD">
    <property type="method" value="EM"/>
    <property type="resolution" value="4.38 A"/>
    <property type="chains" value="D/d=1-528"/>
</dbReference>
<dbReference type="PDB" id="6KRE">
    <property type="method" value="EM"/>
    <property type="resolution" value="4.45 A"/>
    <property type="chains" value="D/d=1-528"/>
</dbReference>
<dbReference type="PDB" id="6KS6">
    <property type="method" value="EM"/>
    <property type="resolution" value="2.99 A"/>
    <property type="chains" value="D/d=1-528"/>
</dbReference>
<dbReference type="PDB" id="6KS7">
    <property type="method" value="EM"/>
    <property type="resolution" value="4.62 A"/>
    <property type="chains" value="D/d=1-528"/>
</dbReference>
<dbReference type="PDB" id="6KS8">
    <property type="method" value="EM"/>
    <property type="resolution" value="4.69 A"/>
    <property type="chains" value="D/d=1-528"/>
</dbReference>
<dbReference type="PDB" id="7YLU">
    <property type="method" value="EM"/>
    <property type="resolution" value="4.55 A"/>
    <property type="chains" value="D/d=1-528"/>
</dbReference>
<dbReference type="PDB" id="7YLV">
    <property type="method" value="EM"/>
    <property type="resolution" value="3.91 A"/>
    <property type="chains" value="D/d=1-528"/>
</dbReference>
<dbReference type="PDB" id="7YLW">
    <property type="method" value="EM"/>
    <property type="resolution" value="3.39 A"/>
    <property type="chains" value="D/d=1-528"/>
</dbReference>
<dbReference type="PDB" id="7YLX">
    <property type="method" value="EM"/>
    <property type="resolution" value="3.20 A"/>
    <property type="chains" value="D/d=1-528"/>
</dbReference>
<dbReference type="PDB" id="7YLY">
    <property type="method" value="EM"/>
    <property type="resolution" value="3.05 A"/>
    <property type="chains" value="D/d=1-528"/>
</dbReference>
<dbReference type="PDB" id="9CR2">
    <property type="method" value="EM"/>
    <property type="resolution" value="4.80 A"/>
    <property type="chains" value="D/d=1-528"/>
</dbReference>
<dbReference type="PDB" id="9CS3">
    <property type="method" value="EM"/>
    <property type="resolution" value="5.60 A"/>
    <property type="chains" value="D/d=1-528"/>
</dbReference>
<dbReference type="PDB" id="9CS4">
    <property type="method" value="EM"/>
    <property type="resolution" value="6.80 A"/>
    <property type="chains" value="D/d=1-528"/>
</dbReference>
<dbReference type="PDB" id="9CS6">
    <property type="method" value="EM"/>
    <property type="resolution" value="4.10 A"/>
    <property type="chains" value="D/d=1-528"/>
</dbReference>
<dbReference type="PDB" id="9CSA">
    <property type="method" value="EM"/>
    <property type="resolution" value="3.60 A"/>
    <property type="chains" value="D/d=1-528"/>
</dbReference>
<dbReference type="PDBsum" id="4V81"/>
<dbReference type="PDBsum" id="4V8R"/>
<dbReference type="PDBsum" id="4V94"/>
<dbReference type="PDBsum" id="5GW4"/>
<dbReference type="PDBsum" id="5GW5"/>
<dbReference type="PDBsum" id="6KRD"/>
<dbReference type="PDBsum" id="6KRE"/>
<dbReference type="PDBsum" id="6KS6"/>
<dbReference type="PDBsum" id="6KS7"/>
<dbReference type="PDBsum" id="6KS8"/>
<dbReference type="PDBsum" id="7YLU"/>
<dbReference type="PDBsum" id="7YLV"/>
<dbReference type="PDBsum" id="7YLW"/>
<dbReference type="PDBsum" id="7YLX"/>
<dbReference type="PDBsum" id="7YLY"/>
<dbReference type="PDBsum" id="9CR2"/>
<dbReference type="PDBsum" id="9CS3"/>
<dbReference type="PDBsum" id="9CS4"/>
<dbReference type="PDBsum" id="9CS6"/>
<dbReference type="PDBsum" id="9CSA"/>
<dbReference type="EMDB" id="EMD-0756"/>
<dbReference type="EMDB" id="EMD-0757"/>
<dbReference type="EMDB" id="EMD-0758"/>
<dbReference type="EMDB" id="EMD-0759"/>
<dbReference type="EMDB" id="EMD-0760"/>
<dbReference type="EMDB" id="EMD-33917"/>
<dbReference type="EMDB" id="EMD-33918"/>
<dbReference type="EMDB" id="EMD-33919"/>
<dbReference type="EMDB" id="EMD-33920"/>
<dbReference type="EMDB" id="EMD-33921"/>
<dbReference type="EMDB" id="EMD-45830"/>
<dbReference type="EMDB" id="EMD-45886"/>
<dbReference type="EMDB" id="EMD-45887"/>
<dbReference type="EMDB" id="EMD-45888"/>
<dbReference type="EMDB" id="EMD-45889"/>
<dbReference type="EMDB" id="EMD-6902"/>
<dbReference type="EMDB" id="EMD-9540"/>
<dbReference type="EMDB" id="EMD-9541"/>
<dbReference type="SMR" id="P39078"/>
<dbReference type="BioGRID" id="31918">
    <property type="interactions" value="409"/>
</dbReference>
<dbReference type="ComplexPortal" id="CPX-2156">
    <property type="entry name" value="Chaperonin-containing T-complex"/>
</dbReference>
<dbReference type="DIP" id="DIP-6753N"/>
<dbReference type="FunCoup" id="P39078">
    <property type="interactions" value="1741"/>
</dbReference>
<dbReference type="IntAct" id="P39078">
    <property type="interactions" value="68"/>
</dbReference>
<dbReference type="MINT" id="P39078"/>
<dbReference type="STRING" id="4932.YDL143W"/>
<dbReference type="GlyGen" id="P39078">
    <property type="glycosylation" value="4 sites, 1 O-linked glycan (4 sites)"/>
</dbReference>
<dbReference type="iPTMnet" id="P39078"/>
<dbReference type="PaxDb" id="4932-YDL143W"/>
<dbReference type="PeptideAtlas" id="P39078"/>
<dbReference type="DNASU" id="851412"/>
<dbReference type="EnsemblFungi" id="YDL143W_mRNA">
    <property type="protein sequence ID" value="YDL143W"/>
    <property type="gene ID" value="YDL143W"/>
</dbReference>
<dbReference type="GeneID" id="851412"/>
<dbReference type="KEGG" id="sce:YDL143W"/>
<dbReference type="AGR" id="SGD:S000002302"/>
<dbReference type="SGD" id="S000002302">
    <property type="gene designation" value="CCT4"/>
</dbReference>
<dbReference type="VEuPathDB" id="FungiDB:YDL143W"/>
<dbReference type="eggNOG" id="KOG0358">
    <property type="taxonomic scope" value="Eukaryota"/>
</dbReference>
<dbReference type="GeneTree" id="ENSGT00550000074956"/>
<dbReference type="HOGENOM" id="CLU_008891_9_1_1"/>
<dbReference type="InParanoid" id="P39078"/>
<dbReference type="OMA" id="HPAANMI"/>
<dbReference type="OrthoDB" id="10248520at2759"/>
<dbReference type="BioCyc" id="YEAST:G3O-29540-MONOMER"/>
<dbReference type="BRENDA" id="3.6.4.B10">
    <property type="organism ID" value="984"/>
</dbReference>
<dbReference type="Reactome" id="R-SCE-390471">
    <property type="pathway name" value="Association of TriC/CCT with target proteins during biosynthesis"/>
</dbReference>
<dbReference type="Reactome" id="R-SCE-6814122">
    <property type="pathway name" value="Cooperation of PDCL (PhLP1) and TRiC/CCT in G-protein beta folding"/>
</dbReference>
<dbReference type="BioGRID-ORCS" id="851412">
    <property type="hits" value="8 hits in 10 CRISPR screens"/>
</dbReference>
<dbReference type="PRO" id="PR:P39078"/>
<dbReference type="Proteomes" id="UP000002311">
    <property type="component" value="Chromosome IV"/>
</dbReference>
<dbReference type="RNAct" id="P39078">
    <property type="molecule type" value="protein"/>
</dbReference>
<dbReference type="GO" id="GO:0005832">
    <property type="term" value="C:chaperonin-containing T-complex"/>
    <property type="evidence" value="ECO:0000314"/>
    <property type="project" value="SGD"/>
</dbReference>
<dbReference type="GO" id="GO:0005524">
    <property type="term" value="F:ATP binding"/>
    <property type="evidence" value="ECO:0007669"/>
    <property type="project" value="UniProtKB-KW"/>
</dbReference>
<dbReference type="GO" id="GO:0016887">
    <property type="term" value="F:ATP hydrolysis activity"/>
    <property type="evidence" value="ECO:0007669"/>
    <property type="project" value="InterPro"/>
</dbReference>
<dbReference type="GO" id="GO:0140662">
    <property type="term" value="F:ATP-dependent protein folding chaperone"/>
    <property type="evidence" value="ECO:0007669"/>
    <property type="project" value="InterPro"/>
</dbReference>
<dbReference type="GO" id="GO:0051082">
    <property type="term" value="F:unfolded protein binding"/>
    <property type="evidence" value="ECO:0000314"/>
    <property type="project" value="SGD"/>
</dbReference>
<dbReference type="GO" id="GO:0051086">
    <property type="term" value="P:chaperone mediated protein folding independent of cofactor"/>
    <property type="evidence" value="ECO:0000314"/>
    <property type="project" value="ComplexPortal"/>
</dbReference>
<dbReference type="GO" id="GO:0006457">
    <property type="term" value="P:protein folding"/>
    <property type="evidence" value="ECO:0000314"/>
    <property type="project" value="SGD"/>
</dbReference>
<dbReference type="CDD" id="cd03338">
    <property type="entry name" value="TCP1_delta"/>
    <property type="match status" value="1"/>
</dbReference>
<dbReference type="FunFam" id="3.50.7.10:FF:000010">
    <property type="entry name" value="T-complex protein 1 subunit delta"/>
    <property type="match status" value="1"/>
</dbReference>
<dbReference type="Gene3D" id="3.50.7.10">
    <property type="entry name" value="GroEL"/>
    <property type="match status" value="1"/>
</dbReference>
<dbReference type="Gene3D" id="1.10.560.10">
    <property type="entry name" value="GroEL-like equatorial domain"/>
    <property type="match status" value="1"/>
</dbReference>
<dbReference type="Gene3D" id="3.30.260.10">
    <property type="entry name" value="TCP-1-like chaperonin intermediate domain"/>
    <property type="match status" value="1"/>
</dbReference>
<dbReference type="InterPro" id="IPR012717">
    <property type="entry name" value="Chap_CCT_delta"/>
</dbReference>
<dbReference type="InterPro" id="IPR017998">
    <property type="entry name" value="Chaperone_TCP-1"/>
</dbReference>
<dbReference type="InterPro" id="IPR002194">
    <property type="entry name" value="Chaperonin_TCP-1_CS"/>
</dbReference>
<dbReference type="InterPro" id="IPR002423">
    <property type="entry name" value="Cpn60/GroEL/TCP-1"/>
</dbReference>
<dbReference type="InterPro" id="IPR027409">
    <property type="entry name" value="GroEL-like_apical_dom_sf"/>
</dbReference>
<dbReference type="InterPro" id="IPR027413">
    <property type="entry name" value="GROEL-like_equatorial_sf"/>
</dbReference>
<dbReference type="InterPro" id="IPR027410">
    <property type="entry name" value="TCP-1-like_intermed_sf"/>
</dbReference>
<dbReference type="InterPro" id="IPR053374">
    <property type="entry name" value="TCP-1_chaperonin"/>
</dbReference>
<dbReference type="InterPro" id="IPR054827">
    <property type="entry name" value="thermosome_alpha"/>
</dbReference>
<dbReference type="NCBIfam" id="TIGR02342">
    <property type="entry name" value="chap_CCT_delta"/>
    <property type="match status" value="1"/>
</dbReference>
<dbReference type="NCBIfam" id="NF041082">
    <property type="entry name" value="thermosome_alpha"/>
    <property type="match status" value="1"/>
</dbReference>
<dbReference type="NCBIfam" id="NF041083">
    <property type="entry name" value="thermosome_beta"/>
    <property type="match status" value="1"/>
</dbReference>
<dbReference type="PANTHER" id="PTHR11353">
    <property type="entry name" value="CHAPERONIN"/>
    <property type="match status" value="1"/>
</dbReference>
<dbReference type="Pfam" id="PF00118">
    <property type="entry name" value="Cpn60_TCP1"/>
    <property type="match status" value="1"/>
</dbReference>
<dbReference type="PRINTS" id="PR00304">
    <property type="entry name" value="TCOMPLEXTCP1"/>
</dbReference>
<dbReference type="SUPFAM" id="SSF52029">
    <property type="entry name" value="GroEL apical domain-like"/>
    <property type="match status" value="1"/>
</dbReference>
<dbReference type="SUPFAM" id="SSF48592">
    <property type="entry name" value="GroEL equatorial domain-like"/>
    <property type="match status" value="1"/>
</dbReference>
<dbReference type="SUPFAM" id="SSF54849">
    <property type="entry name" value="GroEL-intermediate domain like"/>
    <property type="match status" value="1"/>
</dbReference>
<dbReference type="PROSITE" id="PS00750">
    <property type="entry name" value="TCP1_1"/>
    <property type="match status" value="1"/>
</dbReference>
<dbReference type="PROSITE" id="PS00751">
    <property type="entry name" value="TCP1_2"/>
    <property type="match status" value="1"/>
</dbReference>
<dbReference type="PROSITE" id="PS00995">
    <property type="entry name" value="TCP1_3"/>
    <property type="match status" value="1"/>
</dbReference>
<comment type="function">
    <text>Molecular chaperone; assists the folding of proteins upon ATP hydrolysis. Known to play a role, in vitro, in the folding of actin and tubulin. In yeast may play a role in mitotic spindle formation.</text>
</comment>
<comment type="subunit">
    <text>Heterooligomeric complex of about 850 to 900 kDa that forms two stacked rings, 12 to 16 nm in diameter.</text>
</comment>
<comment type="subcellular location">
    <subcellularLocation>
        <location>Cytoplasm</location>
    </subcellularLocation>
</comment>
<comment type="miscellaneous">
    <text evidence="1">Present with 5530 molecules/cell in log phase SD medium.</text>
</comment>
<comment type="similarity">
    <text evidence="2">Belongs to the TCP-1 chaperonin family.</text>
</comment>
<organism>
    <name type="scientific">Saccharomyces cerevisiae (strain ATCC 204508 / S288c)</name>
    <name type="common">Baker's yeast</name>
    <dbReference type="NCBI Taxonomy" id="559292"/>
    <lineage>
        <taxon>Eukaryota</taxon>
        <taxon>Fungi</taxon>
        <taxon>Dikarya</taxon>
        <taxon>Ascomycota</taxon>
        <taxon>Saccharomycotina</taxon>
        <taxon>Saccharomycetes</taxon>
        <taxon>Saccharomycetales</taxon>
        <taxon>Saccharomycetaceae</taxon>
        <taxon>Saccharomyces</taxon>
    </lineage>
</organism>